<reference key="1">
    <citation type="submission" date="2007-06" db="EMBL/GenBank/DDBJ databases">
        <title>Complete sequence of Clostridium beijerinckii NCIMB 8052.</title>
        <authorList>
            <consortium name="US DOE Joint Genome Institute"/>
            <person name="Copeland A."/>
            <person name="Lucas S."/>
            <person name="Lapidus A."/>
            <person name="Barry K."/>
            <person name="Detter J.C."/>
            <person name="Glavina del Rio T."/>
            <person name="Hammon N."/>
            <person name="Israni S."/>
            <person name="Dalin E."/>
            <person name="Tice H."/>
            <person name="Pitluck S."/>
            <person name="Sims D."/>
            <person name="Brettin T."/>
            <person name="Bruce D."/>
            <person name="Tapia R."/>
            <person name="Brainard J."/>
            <person name="Schmutz J."/>
            <person name="Larimer F."/>
            <person name="Land M."/>
            <person name="Hauser L."/>
            <person name="Kyrpides N."/>
            <person name="Mikhailova N."/>
            <person name="Bennet G."/>
            <person name="Cann I."/>
            <person name="Chen J.-S."/>
            <person name="Contreras A.L."/>
            <person name="Jones D."/>
            <person name="Kashket E."/>
            <person name="Mitchell W."/>
            <person name="Stoddard S."/>
            <person name="Schwarz W."/>
            <person name="Qureshi N."/>
            <person name="Young M."/>
            <person name="Shi Z."/>
            <person name="Ezeji T."/>
            <person name="White B."/>
            <person name="Blaschek H."/>
            <person name="Richardson P."/>
        </authorList>
    </citation>
    <scope>NUCLEOTIDE SEQUENCE [LARGE SCALE GENOMIC DNA]</scope>
    <source>
        <strain>ATCC 51743 / NCIMB 8052</strain>
    </source>
</reference>
<sequence length="95" mass="10996">MRKYETIFILNPSFDEETVKANIEKFKGVIENGGGTVENVDFWGKRKLAYEISKVSEGFYTLVNFTANPELPRELDRIFRITDGVIRHIIVNEQV</sequence>
<organism>
    <name type="scientific">Clostridium beijerinckii (strain ATCC 51743 / NCIMB 8052)</name>
    <name type="common">Clostridium acetobutylicum</name>
    <dbReference type="NCBI Taxonomy" id="290402"/>
    <lineage>
        <taxon>Bacteria</taxon>
        <taxon>Bacillati</taxon>
        <taxon>Bacillota</taxon>
        <taxon>Clostridia</taxon>
        <taxon>Eubacteriales</taxon>
        <taxon>Clostridiaceae</taxon>
        <taxon>Clostridium</taxon>
    </lineage>
</organism>
<protein>
    <recommendedName>
        <fullName evidence="1">Small ribosomal subunit protein bS6</fullName>
    </recommendedName>
    <alternativeName>
        <fullName evidence="2">30S ribosomal protein S6</fullName>
    </alternativeName>
</protein>
<gene>
    <name evidence="1" type="primary">rpsF</name>
    <name type="ordered locus">Cbei_5086</name>
</gene>
<evidence type="ECO:0000255" key="1">
    <source>
        <dbReference type="HAMAP-Rule" id="MF_00360"/>
    </source>
</evidence>
<evidence type="ECO:0000305" key="2"/>
<accession>A6M3L2</accession>
<name>RS6_CLOB8</name>
<comment type="function">
    <text evidence="1">Binds together with bS18 to 16S ribosomal RNA.</text>
</comment>
<comment type="similarity">
    <text evidence="1">Belongs to the bacterial ribosomal protein bS6 family.</text>
</comment>
<proteinExistence type="inferred from homology"/>
<keyword id="KW-0687">Ribonucleoprotein</keyword>
<keyword id="KW-0689">Ribosomal protein</keyword>
<keyword id="KW-0694">RNA-binding</keyword>
<keyword id="KW-0699">rRNA-binding</keyword>
<feature type="chain" id="PRO_1000079438" description="Small ribosomal subunit protein bS6">
    <location>
        <begin position="1"/>
        <end position="95"/>
    </location>
</feature>
<dbReference type="EMBL" id="CP000721">
    <property type="protein sequence ID" value="ABR37192.1"/>
    <property type="molecule type" value="Genomic_DNA"/>
</dbReference>
<dbReference type="RefSeq" id="WP_012061235.1">
    <property type="nucleotide sequence ID" value="NC_009617.1"/>
</dbReference>
<dbReference type="SMR" id="A6M3L2"/>
<dbReference type="GeneID" id="66348048"/>
<dbReference type="KEGG" id="cbe:Cbei_5086"/>
<dbReference type="eggNOG" id="COG0360">
    <property type="taxonomic scope" value="Bacteria"/>
</dbReference>
<dbReference type="HOGENOM" id="CLU_113441_5_1_9"/>
<dbReference type="Proteomes" id="UP000000565">
    <property type="component" value="Chromosome"/>
</dbReference>
<dbReference type="GO" id="GO:0005737">
    <property type="term" value="C:cytoplasm"/>
    <property type="evidence" value="ECO:0007669"/>
    <property type="project" value="UniProtKB-ARBA"/>
</dbReference>
<dbReference type="GO" id="GO:1990904">
    <property type="term" value="C:ribonucleoprotein complex"/>
    <property type="evidence" value="ECO:0007669"/>
    <property type="project" value="UniProtKB-KW"/>
</dbReference>
<dbReference type="GO" id="GO:0005840">
    <property type="term" value="C:ribosome"/>
    <property type="evidence" value="ECO:0007669"/>
    <property type="project" value="UniProtKB-KW"/>
</dbReference>
<dbReference type="GO" id="GO:0070181">
    <property type="term" value="F:small ribosomal subunit rRNA binding"/>
    <property type="evidence" value="ECO:0007669"/>
    <property type="project" value="TreeGrafter"/>
</dbReference>
<dbReference type="GO" id="GO:0003735">
    <property type="term" value="F:structural constituent of ribosome"/>
    <property type="evidence" value="ECO:0007669"/>
    <property type="project" value="InterPro"/>
</dbReference>
<dbReference type="GO" id="GO:0006412">
    <property type="term" value="P:translation"/>
    <property type="evidence" value="ECO:0007669"/>
    <property type="project" value="UniProtKB-UniRule"/>
</dbReference>
<dbReference type="CDD" id="cd00473">
    <property type="entry name" value="bS6"/>
    <property type="match status" value="1"/>
</dbReference>
<dbReference type="FunFam" id="3.30.70.60:FF:000002">
    <property type="entry name" value="30S ribosomal protein S6"/>
    <property type="match status" value="1"/>
</dbReference>
<dbReference type="Gene3D" id="3.30.70.60">
    <property type="match status" value="1"/>
</dbReference>
<dbReference type="HAMAP" id="MF_00360">
    <property type="entry name" value="Ribosomal_bS6"/>
    <property type="match status" value="1"/>
</dbReference>
<dbReference type="InterPro" id="IPR000529">
    <property type="entry name" value="Ribosomal_bS6"/>
</dbReference>
<dbReference type="InterPro" id="IPR035980">
    <property type="entry name" value="Ribosomal_bS6_sf"/>
</dbReference>
<dbReference type="InterPro" id="IPR020814">
    <property type="entry name" value="Ribosomal_S6_plastid/chlpt"/>
</dbReference>
<dbReference type="InterPro" id="IPR014717">
    <property type="entry name" value="Transl_elong_EF1B/ribsomal_bS6"/>
</dbReference>
<dbReference type="NCBIfam" id="TIGR00166">
    <property type="entry name" value="S6"/>
    <property type="match status" value="1"/>
</dbReference>
<dbReference type="PANTHER" id="PTHR21011">
    <property type="entry name" value="MITOCHONDRIAL 28S RIBOSOMAL PROTEIN S6"/>
    <property type="match status" value="1"/>
</dbReference>
<dbReference type="PANTHER" id="PTHR21011:SF1">
    <property type="entry name" value="SMALL RIBOSOMAL SUBUNIT PROTEIN BS6M"/>
    <property type="match status" value="1"/>
</dbReference>
<dbReference type="Pfam" id="PF01250">
    <property type="entry name" value="Ribosomal_S6"/>
    <property type="match status" value="1"/>
</dbReference>
<dbReference type="SUPFAM" id="SSF54995">
    <property type="entry name" value="Ribosomal protein S6"/>
    <property type="match status" value="1"/>
</dbReference>